<comment type="function">
    <text evidence="1">Provides the cells with the ability to utilize trehalose at high osmolarity by splitting it into glucose molecules that can subsequently be taken up by the phosphotransferase-mediated uptake system.</text>
</comment>
<comment type="catalytic activity">
    <reaction evidence="1">
        <text>alpha,alpha-trehalose + H2O = alpha-D-glucose + beta-D-glucose</text>
        <dbReference type="Rhea" id="RHEA:32675"/>
        <dbReference type="ChEBI" id="CHEBI:15377"/>
        <dbReference type="ChEBI" id="CHEBI:15903"/>
        <dbReference type="ChEBI" id="CHEBI:16551"/>
        <dbReference type="ChEBI" id="CHEBI:17925"/>
        <dbReference type="EC" id="3.2.1.28"/>
    </reaction>
</comment>
<comment type="subunit">
    <text evidence="1">Monomer.</text>
</comment>
<comment type="subcellular location">
    <subcellularLocation>
        <location evidence="1">Periplasm</location>
    </subcellularLocation>
</comment>
<comment type="similarity">
    <text evidence="1">Belongs to the glycosyl hydrolase 37 family.</text>
</comment>
<gene>
    <name evidence="1" type="primary">treA</name>
    <name type="ordered locus">EcE24377A_1343</name>
</gene>
<organism>
    <name type="scientific">Escherichia coli O139:H28 (strain E24377A / ETEC)</name>
    <dbReference type="NCBI Taxonomy" id="331111"/>
    <lineage>
        <taxon>Bacteria</taxon>
        <taxon>Pseudomonadati</taxon>
        <taxon>Pseudomonadota</taxon>
        <taxon>Gammaproteobacteria</taxon>
        <taxon>Enterobacterales</taxon>
        <taxon>Enterobacteriaceae</taxon>
        <taxon>Escherichia</taxon>
    </lineage>
</organism>
<accession>A7ZKW9</accession>
<protein>
    <recommendedName>
        <fullName evidence="1">Periplasmic trehalase</fullName>
        <ecNumber evidence="1">3.2.1.28</ecNumber>
    </recommendedName>
    <alternativeName>
        <fullName evidence="1">Alpha,alpha-trehalase</fullName>
    </alternativeName>
    <alternativeName>
        <fullName evidence="1">Alpha,alpha-trehalose glucohydrolase</fullName>
    </alternativeName>
</protein>
<dbReference type="EC" id="3.2.1.28" evidence="1"/>
<dbReference type="EMBL" id="CP000800">
    <property type="protein sequence ID" value="ABV20897.1"/>
    <property type="molecule type" value="Genomic_DNA"/>
</dbReference>
<dbReference type="RefSeq" id="WP_000841718.1">
    <property type="nucleotide sequence ID" value="NC_009801.1"/>
</dbReference>
<dbReference type="SMR" id="A7ZKW9"/>
<dbReference type="CAZy" id="GH37">
    <property type="family name" value="Glycoside Hydrolase Family 37"/>
</dbReference>
<dbReference type="KEGG" id="ecw:EcE24377A_1343"/>
<dbReference type="HOGENOM" id="CLU_006451_3_1_6"/>
<dbReference type="Proteomes" id="UP000001122">
    <property type="component" value="Chromosome"/>
</dbReference>
<dbReference type="GO" id="GO:0042597">
    <property type="term" value="C:periplasmic space"/>
    <property type="evidence" value="ECO:0007669"/>
    <property type="project" value="UniProtKB-SubCell"/>
</dbReference>
<dbReference type="GO" id="GO:0004555">
    <property type="term" value="F:alpha,alpha-trehalase activity"/>
    <property type="evidence" value="ECO:0007669"/>
    <property type="project" value="UniProtKB-UniRule"/>
</dbReference>
<dbReference type="GO" id="GO:0071474">
    <property type="term" value="P:cellular hyperosmotic response"/>
    <property type="evidence" value="ECO:0007669"/>
    <property type="project" value="InterPro"/>
</dbReference>
<dbReference type="GO" id="GO:0005993">
    <property type="term" value="P:trehalose catabolic process"/>
    <property type="evidence" value="ECO:0007669"/>
    <property type="project" value="InterPro"/>
</dbReference>
<dbReference type="FunFam" id="1.50.10.10:FF:000003">
    <property type="entry name" value="Cytoplasmic trehalase"/>
    <property type="match status" value="1"/>
</dbReference>
<dbReference type="Gene3D" id="1.50.10.10">
    <property type="match status" value="1"/>
</dbReference>
<dbReference type="HAMAP" id="MF_01060">
    <property type="entry name" value="Peripl_trehalase"/>
    <property type="match status" value="1"/>
</dbReference>
<dbReference type="InterPro" id="IPR008928">
    <property type="entry name" value="6-hairpin_glycosidase_sf"/>
</dbReference>
<dbReference type="InterPro" id="IPR012341">
    <property type="entry name" value="6hp_glycosidase-like_sf"/>
</dbReference>
<dbReference type="InterPro" id="IPR001661">
    <property type="entry name" value="Glyco_hydro_37"/>
</dbReference>
<dbReference type="InterPro" id="IPR018232">
    <property type="entry name" value="Glyco_hydro_37_CS"/>
</dbReference>
<dbReference type="InterPro" id="IPR023720">
    <property type="entry name" value="Trehalase_periplasmic"/>
</dbReference>
<dbReference type="NCBIfam" id="NF009773">
    <property type="entry name" value="PRK13270.1"/>
    <property type="match status" value="1"/>
</dbReference>
<dbReference type="NCBIfam" id="NF009774">
    <property type="entry name" value="PRK13271.1"/>
    <property type="match status" value="1"/>
</dbReference>
<dbReference type="PANTHER" id="PTHR23403">
    <property type="entry name" value="TREHALASE"/>
    <property type="match status" value="1"/>
</dbReference>
<dbReference type="PANTHER" id="PTHR23403:SF1">
    <property type="entry name" value="TREHALASE"/>
    <property type="match status" value="1"/>
</dbReference>
<dbReference type="Pfam" id="PF01204">
    <property type="entry name" value="Trehalase"/>
    <property type="match status" value="1"/>
</dbReference>
<dbReference type="PRINTS" id="PR00744">
    <property type="entry name" value="GLHYDRLASE37"/>
</dbReference>
<dbReference type="SUPFAM" id="SSF48208">
    <property type="entry name" value="Six-hairpin glycosidases"/>
    <property type="match status" value="1"/>
</dbReference>
<dbReference type="PROSITE" id="PS00927">
    <property type="entry name" value="TREHALASE_1"/>
    <property type="match status" value="1"/>
</dbReference>
<dbReference type="PROSITE" id="PS00928">
    <property type="entry name" value="TREHALASE_2"/>
    <property type="match status" value="1"/>
</dbReference>
<feature type="signal peptide" evidence="1">
    <location>
        <begin position="1"/>
        <end position="30"/>
    </location>
</feature>
<feature type="chain" id="PRO_1000064450" description="Periplasmic trehalase">
    <location>
        <begin position="31"/>
        <end position="565"/>
    </location>
</feature>
<feature type="region of interest" description="Disordered" evidence="2">
    <location>
        <begin position="538"/>
        <end position="565"/>
    </location>
</feature>
<feature type="compositionally biased region" description="Polar residues" evidence="2">
    <location>
        <begin position="548"/>
        <end position="565"/>
    </location>
</feature>
<feature type="active site" description="Proton donor/acceptor" evidence="1">
    <location>
        <position position="312"/>
    </location>
</feature>
<feature type="active site" description="Proton donor/acceptor" evidence="1">
    <location>
        <position position="496"/>
    </location>
</feature>
<feature type="binding site" evidence="1">
    <location>
        <position position="152"/>
    </location>
    <ligand>
        <name>substrate</name>
    </ligand>
</feature>
<feature type="binding site" evidence="1">
    <location>
        <begin position="159"/>
        <end position="160"/>
    </location>
    <ligand>
        <name>substrate</name>
    </ligand>
</feature>
<feature type="binding site" evidence="1">
    <location>
        <position position="196"/>
    </location>
    <ligand>
        <name>substrate</name>
    </ligand>
</feature>
<feature type="binding site" evidence="1">
    <location>
        <begin position="205"/>
        <end position="207"/>
    </location>
    <ligand>
        <name>substrate</name>
    </ligand>
</feature>
<feature type="binding site" evidence="1">
    <location>
        <begin position="277"/>
        <end position="279"/>
    </location>
    <ligand>
        <name>substrate</name>
    </ligand>
</feature>
<feature type="binding site" evidence="1">
    <location>
        <position position="310"/>
    </location>
    <ligand>
        <name>substrate</name>
    </ligand>
</feature>
<feature type="binding site" evidence="1">
    <location>
        <position position="511"/>
    </location>
    <ligand>
        <name>substrate</name>
    </ligand>
</feature>
<keyword id="KW-0326">Glycosidase</keyword>
<keyword id="KW-0378">Hydrolase</keyword>
<keyword id="KW-0574">Periplasm</keyword>
<keyword id="KW-1185">Reference proteome</keyword>
<keyword id="KW-0732">Signal</keyword>
<name>TREA_ECO24</name>
<sequence length="565" mass="63655">MKSPAPSRPQKMALIPACIFLCFAALSVQAEETPVTPQPPDILLGPLFNDVQNAKLFPDQKTFADAVPNSDPLMILADYRMQQNQSGFDLRHFVNVNFTLPKEGEKYVPPEGQSLREHIDGLWPVLTRSTENTEKWDSLLPLPEPYVVPGGRFREVYYWDSYFTMLGLAESGHWDKVADMVANFAHEIDTYGHIPNGNRSYYLSRSQPPFFAMMVELLAQHEGDAALKQYLPQMQKEYAYWMDGVENLQAGQQEKRVVKLQDGTLLNRYWDDRDTPRPESWVEDIATAKSNPNRPATEIYRDLRSAAASGWDFSSRWMDNPQQLNTLRTTSIVPVDLNSLMFKMEKILARASKAAGDNAMANQYETLANARQKGIEKYLWNDQQGWYADYDLKSHKVRNQLTAAALFPLYVNAAAKDRANKMATATKTHLLQPGGLNTTSVKSGQQWDAPNGWAPLQWVATEGLQNYGQKEVAMDISWHFLTNVQHTYDREKKLVEKYDVSTTGTGGGGGEYPLQDGFGWTNGVTLKMLDLICPKEQPCDNVPATRPTVKSATTQPSTKEAQPTP</sequence>
<proteinExistence type="inferred from homology"/>
<reference key="1">
    <citation type="journal article" date="2008" name="J. Bacteriol.">
        <title>The pangenome structure of Escherichia coli: comparative genomic analysis of E. coli commensal and pathogenic isolates.</title>
        <authorList>
            <person name="Rasko D.A."/>
            <person name="Rosovitz M.J."/>
            <person name="Myers G.S.A."/>
            <person name="Mongodin E.F."/>
            <person name="Fricke W.F."/>
            <person name="Gajer P."/>
            <person name="Crabtree J."/>
            <person name="Sebaihia M."/>
            <person name="Thomson N.R."/>
            <person name="Chaudhuri R."/>
            <person name="Henderson I.R."/>
            <person name="Sperandio V."/>
            <person name="Ravel J."/>
        </authorList>
    </citation>
    <scope>NUCLEOTIDE SEQUENCE [LARGE SCALE GENOMIC DNA]</scope>
    <source>
        <strain>E24377A / ETEC</strain>
    </source>
</reference>
<evidence type="ECO:0000255" key="1">
    <source>
        <dbReference type="HAMAP-Rule" id="MF_01060"/>
    </source>
</evidence>
<evidence type="ECO:0000256" key="2">
    <source>
        <dbReference type="SAM" id="MobiDB-lite"/>
    </source>
</evidence>